<protein>
    <recommendedName>
        <fullName evidence="1">Aspartyl/glutamyl-tRNA(Asn/Gln) amidotransferase subunit C</fullName>
        <shortName evidence="1">Asp/Glu-ADT subunit C</shortName>
        <ecNumber evidence="1">6.3.5.-</ecNumber>
    </recommendedName>
</protein>
<name>GATC_BACMK</name>
<evidence type="ECO:0000255" key="1">
    <source>
        <dbReference type="HAMAP-Rule" id="MF_00122"/>
    </source>
</evidence>
<reference key="1">
    <citation type="journal article" date="2008" name="Chem. Biol. Interact.">
        <title>Extending the Bacillus cereus group genomics to putative food-borne pathogens of different toxicity.</title>
        <authorList>
            <person name="Lapidus A."/>
            <person name="Goltsman E."/>
            <person name="Auger S."/>
            <person name="Galleron N."/>
            <person name="Segurens B."/>
            <person name="Dossat C."/>
            <person name="Land M.L."/>
            <person name="Broussolle V."/>
            <person name="Brillard J."/>
            <person name="Guinebretiere M.-H."/>
            <person name="Sanchis V."/>
            <person name="Nguen-the C."/>
            <person name="Lereclus D."/>
            <person name="Richardson P."/>
            <person name="Wincker P."/>
            <person name="Weissenbach J."/>
            <person name="Ehrlich S.D."/>
            <person name="Sorokin A."/>
        </authorList>
    </citation>
    <scope>NUCLEOTIDE SEQUENCE [LARGE SCALE GENOMIC DNA]</scope>
    <source>
        <strain>KBAB4</strain>
    </source>
</reference>
<dbReference type="EC" id="6.3.5.-" evidence="1"/>
<dbReference type="EMBL" id="CP000903">
    <property type="protein sequence ID" value="ABY41566.1"/>
    <property type="molecule type" value="Genomic_DNA"/>
</dbReference>
<dbReference type="RefSeq" id="WP_000086999.1">
    <property type="nucleotide sequence ID" value="NZ_CAKMRX030000136.1"/>
</dbReference>
<dbReference type="SMR" id="A9VRH6"/>
<dbReference type="GeneID" id="93010705"/>
<dbReference type="KEGG" id="bwe:BcerKBAB4_0300"/>
<dbReference type="eggNOG" id="COG0721">
    <property type="taxonomic scope" value="Bacteria"/>
</dbReference>
<dbReference type="HOGENOM" id="CLU_105899_6_1_9"/>
<dbReference type="Proteomes" id="UP000002154">
    <property type="component" value="Chromosome"/>
</dbReference>
<dbReference type="GO" id="GO:0050566">
    <property type="term" value="F:asparaginyl-tRNA synthase (glutamine-hydrolyzing) activity"/>
    <property type="evidence" value="ECO:0007669"/>
    <property type="project" value="RHEA"/>
</dbReference>
<dbReference type="GO" id="GO:0005524">
    <property type="term" value="F:ATP binding"/>
    <property type="evidence" value="ECO:0007669"/>
    <property type="project" value="UniProtKB-KW"/>
</dbReference>
<dbReference type="GO" id="GO:0050567">
    <property type="term" value="F:glutaminyl-tRNA synthase (glutamine-hydrolyzing) activity"/>
    <property type="evidence" value="ECO:0007669"/>
    <property type="project" value="UniProtKB-UniRule"/>
</dbReference>
<dbReference type="GO" id="GO:0070681">
    <property type="term" value="P:glutaminyl-tRNAGln biosynthesis via transamidation"/>
    <property type="evidence" value="ECO:0007669"/>
    <property type="project" value="TreeGrafter"/>
</dbReference>
<dbReference type="GO" id="GO:0006450">
    <property type="term" value="P:regulation of translational fidelity"/>
    <property type="evidence" value="ECO:0007669"/>
    <property type="project" value="InterPro"/>
</dbReference>
<dbReference type="GO" id="GO:0006412">
    <property type="term" value="P:translation"/>
    <property type="evidence" value="ECO:0007669"/>
    <property type="project" value="UniProtKB-UniRule"/>
</dbReference>
<dbReference type="Gene3D" id="1.10.20.60">
    <property type="entry name" value="Glu-tRNAGln amidotransferase C subunit, N-terminal domain"/>
    <property type="match status" value="1"/>
</dbReference>
<dbReference type="HAMAP" id="MF_00122">
    <property type="entry name" value="GatC"/>
    <property type="match status" value="1"/>
</dbReference>
<dbReference type="InterPro" id="IPR036113">
    <property type="entry name" value="Asp/Glu-ADT_sf_sub_c"/>
</dbReference>
<dbReference type="InterPro" id="IPR003837">
    <property type="entry name" value="GatC"/>
</dbReference>
<dbReference type="NCBIfam" id="TIGR00135">
    <property type="entry name" value="gatC"/>
    <property type="match status" value="1"/>
</dbReference>
<dbReference type="PANTHER" id="PTHR15004">
    <property type="entry name" value="GLUTAMYL-TRNA(GLN) AMIDOTRANSFERASE SUBUNIT C, MITOCHONDRIAL"/>
    <property type="match status" value="1"/>
</dbReference>
<dbReference type="PANTHER" id="PTHR15004:SF0">
    <property type="entry name" value="GLUTAMYL-TRNA(GLN) AMIDOTRANSFERASE SUBUNIT C, MITOCHONDRIAL"/>
    <property type="match status" value="1"/>
</dbReference>
<dbReference type="Pfam" id="PF02686">
    <property type="entry name" value="GatC"/>
    <property type="match status" value="1"/>
</dbReference>
<dbReference type="SUPFAM" id="SSF141000">
    <property type="entry name" value="Glu-tRNAGln amidotransferase C subunit"/>
    <property type="match status" value="1"/>
</dbReference>
<proteinExistence type="inferred from homology"/>
<feature type="chain" id="PRO_1000095260" description="Aspartyl/glutamyl-tRNA(Asn/Gln) amidotransferase subunit C">
    <location>
        <begin position="1"/>
        <end position="96"/>
    </location>
</feature>
<comment type="function">
    <text evidence="1">Allows the formation of correctly charged Asn-tRNA(Asn) or Gln-tRNA(Gln) through the transamidation of misacylated Asp-tRNA(Asn) or Glu-tRNA(Gln) in organisms which lack either or both of asparaginyl-tRNA or glutaminyl-tRNA synthetases. The reaction takes place in the presence of glutamine and ATP through an activated phospho-Asp-tRNA(Asn) or phospho-Glu-tRNA(Gln).</text>
</comment>
<comment type="catalytic activity">
    <reaction evidence="1">
        <text>L-glutamyl-tRNA(Gln) + L-glutamine + ATP + H2O = L-glutaminyl-tRNA(Gln) + L-glutamate + ADP + phosphate + H(+)</text>
        <dbReference type="Rhea" id="RHEA:17521"/>
        <dbReference type="Rhea" id="RHEA-COMP:9681"/>
        <dbReference type="Rhea" id="RHEA-COMP:9684"/>
        <dbReference type="ChEBI" id="CHEBI:15377"/>
        <dbReference type="ChEBI" id="CHEBI:15378"/>
        <dbReference type="ChEBI" id="CHEBI:29985"/>
        <dbReference type="ChEBI" id="CHEBI:30616"/>
        <dbReference type="ChEBI" id="CHEBI:43474"/>
        <dbReference type="ChEBI" id="CHEBI:58359"/>
        <dbReference type="ChEBI" id="CHEBI:78520"/>
        <dbReference type="ChEBI" id="CHEBI:78521"/>
        <dbReference type="ChEBI" id="CHEBI:456216"/>
    </reaction>
</comment>
<comment type="catalytic activity">
    <reaction evidence="1">
        <text>L-aspartyl-tRNA(Asn) + L-glutamine + ATP + H2O = L-asparaginyl-tRNA(Asn) + L-glutamate + ADP + phosphate + 2 H(+)</text>
        <dbReference type="Rhea" id="RHEA:14513"/>
        <dbReference type="Rhea" id="RHEA-COMP:9674"/>
        <dbReference type="Rhea" id="RHEA-COMP:9677"/>
        <dbReference type="ChEBI" id="CHEBI:15377"/>
        <dbReference type="ChEBI" id="CHEBI:15378"/>
        <dbReference type="ChEBI" id="CHEBI:29985"/>
        <dbReference type="ChEBI" id="CHEBI:30616"/>
        <dbReference type="ChEBI" id="CHEBI:43474"/>
        <dbReference type="ChEBI" id="CHEBI:58359"/>
        <dbReference type="ChEBI" id="CHEBI:78515"/>
        <dbReference type="ChEBI" id="CHEBI:78516"/>
        <dbReference type="ChEBI" id="CHEBI:456216"/>
    </reaction>
</comment>
<comment type="subunit">
    <text evidence="1">Heterotrimer of A, B and C subunits.</text>
</comment>
<comment type="similarity">
    <text evidence="1">Belongs to the GatC family.</text>
</comment>
<organism>
    <name type="scientific">Bacillus mycoides (strain KBAB4)</name>
    <name type="common">Bacillus weihenstephanensis</name>
    <dbReference type="NCBI Taxonomy" id="315730"/>
    <lineage>
        <taxon>Bacteria</taxon>
        <taxon>Bacillati</taxon>
        <taxon>Bacillota</taxon>
        <taxon>Bacilli</taxon>
        <taxon>Bacillales</taxon>
        <taxon>Bacillaceae</taxon>
        <taxon>Bacillus</taxon>
        <taxon>Bacillus cereus group</taxon>
    </lineage>
</organism>
<sequence>MSRISVENVKHVAHLARLAITDQEAEKFQKQLDAIVTFAEQLNELDTTDVKPTTHVLTMKNVMREDVPEKGLPVEEVLKNAPDHKDNQIRVPAVLE</sequence>
<accession>A9VRH6</accession>
<keyword id="KW-0067">ATP-binding</keyword>
<keyword id="KW-0436">Ligase</keyword>
<keyword id="KW-0547">Nucleotide-binding</keyword>
<keyword id="KW-0648">Protein biosynthesis</keyword>
<gene>
    <name evidence="1" type="primary">gatC</name>
    <name type="ordered locus">BcerKBAB4_0300</name>
</gene>